<reference key="1">
    <citation type="submission" date="2006-08" db="EMBL/GenBank/DDBJ databases">
        <title>Complete sequence of Shewanella frigidimarina NCIMB 400.</title>
        <authorList>
            <consortium name="US DOE Joint Genome Institute"/>
            <person name="Copeland A."/>
            <person name="Lucas S."/>
            <person name="Lapidus A."/>
            <person name="Barry K."/>
            <person name="Detter J.C."/>
            <person name="Glavina del Rio T."/>
            <person name="Hammon N."/>
            <person name="Israni S."/>
            <person name="Dalin E."/>
            <person name="Tice H."/>
            <person name="Pitluck S."/>
            <person name="Fredrickson J.K."/>
            <person name="Kolker E."/>
            <person name="McCuel L.A."/>
            <person name="DiChristina T."/>
            <person name="Nealson K.H."/>
            <person name="Newman D."/>
            <person name="Tiedje J.M."/>
            <person name="Zhou J."/>
            <person name="Romine M.F."/>
            <person name="Culley D.E."/>
            <person name="Serres M."/>
            <person name="Chertkov O."/>
            <person name="Brettin T."/>
            <person name="Bruce D."/>
            <person name="Han C."/>
            <person name="Tapia R."/>
            <person name="Gilna P."/>
            <person name="Schmutz J."/>
            <person name="Larimer F."/>
            <person name="Land M."/>
            <person name="Hauser L."/>
            <person name="Kyrpides N."/>
            <person name="Mikhailova N."/>
            <person name="Richardson P."/>
        </authorList>
    </citation>
    <scope>NUCLEOTIDE SEQUENCE [LARGE SCALE GENOMIC DNA]</scope>
    <source>
        <strain>NCIMB 400</strain>
    </source>
</reference>
<accession>Q084V3</accession>
<protein>
    <recommendedName>
        <fullName evidence="1">Phosphate import ATP-binding protein PstB</fullName>
        <ecNumber evidence="1">7.3.2.1</ecNumber>
    </recommendedName>
    <alternativeName>
        <fullName evidence="1">ABC phosphate transporter</fullName>
    </alternativeName>
    <alternativeName>
        <fullName evidence="1">Phosphate-transporting ATPase</fullName>
    </alternativeName>
</protein>
<name>PSTB_SHEFN</name>
<comment type="function">
    <text evidence="1">Part of the ABC transporter complex PstSACB involved in phosphate import. Responsible for energy coupling to the transport system.</text>
</comment>
<comment type="catalytic activity">
    <reaction evidence="1">
        <text>phosphate(out) + ATP + H2O = ADP + 2 phosphate(in) + H(+)</text>
        <dbReference type="Rhea" id="RHEA:24440"/>
        <dbReference type="ChEBI" id="CHEBI:15377"/>
        <dbReference type="ChEBI" id="CHEBI:15378"/>
        <dbReference type="ChEBI" id="CHEBI:30616"/>
        <dbReference type="ChEBI" id="CHEBI:43474"/>
        <dbReference type="ChEBI" id="CHEBI:456216"/>
        <dbReference type="EC" id="7.3.2.1"/>
    </reaction>
</comment>
<comment type="subunit">
    <text evidence="1">The complex is composed of two ATP-binding proteins (PstB), two transmembrane proteins (PstC and PstA) and a solute-binding protein (PstS).</text>
</comment>
<comment type="subcellular location">
    <subcellularLocation>
        <location evidence="1">Cell inner membrane</location>
        <topology evidence="1">Peripheral membrane protein</topology>
    </subcellularLocation>
</comment>
<comment type="similarity">
    <text evidence="1">Belongs to the ABC transporter superfamily. Phosphate importer (TC 3.A.1.7) family.</text>
</comment>
<evidence type="ECO:0000255" key="1">
    <source>
        <dbReference type="HAMAP-Rule" id="MF_01702"/>
    </source>
</evidence>
<dbReference type="EC" id="7.3.2.1" evidence="1"/>
<dbReference type="EMBL" id="CP000447">
    <property type="protein sequence ID" value="ABI71212.1"/>
    <property type="molecule type" value="Genomic_DNA"/>
</dbReference>
<dbReference type="RefSeq" id="WP_011636833.1">
    <property type="nucleotide sequence ID" value="NC_008345.1"/>
</dbReference>
<dbReference type="SMR" id="Q084V3"/>
<dbReference type="STRING" id="318167.Sfri_1359"/>
<dbReference type="KEGG" id="sfr:Sfri_1359"/>
<dbReference type="eggNOG" id="COG1117">
    <property type="taxonomic scope" value="Bacteria"/>
</dbReference>
<dbReference type="HOGENOM" id="CLU_000604_1_22_6"/>
<dbReference type="OrthoDB" id="9802264at2"/>
<dbReference type="Proteomes" id="UP000000684">
    <property type="component" value="Chromosome"/>
</dbReference>
<dbReference type="GO" id="GO:0005886">
    <property type="term" value="C:plasma membrane"/>
    <property type="evidence" value="ECO:0007669"/>
    <property type="project" value="UniProtKB-SubCell"/>
</dbReference>
<dbReference type="GO" id="GO:0005524">
    <property type="term" value="F:ATP binding"/>
    <property type="evidence" value="ECO:0007669"/>
    <property type="project" value="UniProtKB-KW"/>
</dbReference>
<dbReference type="GO" id="GO:0016887">
    <property type="term" value="F:ATP hydrolysis activity"/>
    <property type="evidence" value="ECO:0007669"/>
    <property type="project" value="InterPro"/>
</dbReference>
<dbReference type="GO" id="GO:0015415">
    <property type="term" value="F:ATPase-coupled phosphate ion transmembrane transporter activity"/>
    <property type="evidence" value="ECO:0007669"/>
    <property type="project" value="UniProtKB-EC"/>
</dbReference>
<dbReference type="GO" id="GO:0035435">
    <property type="term" value="P:phosphate ion transmembrane transport"/>
    <property type="evidence" value="ECO:0007669"/>
    <property type="project" value="InterPro"/>
</dbReference>
<dbReference type="CDD" id="cd03260">
    <property type="entry name" value="ABC_PstB_phosphate_transporter"/>
    <property type="match status" value="1"/>
</dbReference>
<dbReference type="FunFam" id="3.40.50.300:FF:000132">
    <property type="entry name" value="Phosphate import ATP-binding protein PstB"/>
    <property type="match status" value="1"/>
</dbReference>
<dbReference type="Gene3D" id="3.40.50.300">
    <property type="entry name" value="P-loop containing nucleotide triphosphate hydrolases"/>
    <property type="match status" value="1"/>
</dbReference>
<dbReference type="InterPro" id="IPR003593">
    <property type="entry name" value="AAA+_ATPase"/>
</dbReference>
<dbReference type="InterPro" id="IPR003439">
    <property type="entry name" value="ABC_transporter-like_ATP-bd"/>
</dbReference>
<dbReference type="InterPro" id="IPR017871">
    <property type="entry name" value="ABC_transporter-like_CS"/>
</dbReference>
<dbReference type="InterPro" id="IPR027417">
    <property type="entry name" value="P-loop_NTPase"/>
</dbReference>
<dbReference type="InterPro" id="IPR005670">
    <property type="entry name" value="PstB-like"/>
</dbReference>
<dbReference type="NCBIfam" id="TIGR00972">
    <property type="entry name" value="3a0107s01c2"/>
    <property type="match status" value="1"/>
</dbReference>
<dbReference type="PANTHER" id="PTHR43423">
    <property type="entry name" value="ABC TRANSPORTER I FAMILY MEMBER 17"/>
    <property type="match status" value="1"/>
</dbReference>
<dbReference type="PANTHER" id="PTHR43423:SF12">
    <property type="entry name" value="IRON EXPORT ATP-BINDING PROTEIN FETA-RELATED"/>
    <property type="match status" value="1"/>
</dbReference>
<dbReference type="Pfam" id="PF00005">
    <property type="entry name" value="ABC_tran"/>
    <property type="match status" value="1"/>
</dbReference>
<dbReference type="SMART" id="SM00382">
    <property type="entry name" value="AAA"/>
    <property type="match status" value="1"/>
</dbReference>
<dbReference type="SUPFAM" id="SSF52540">
    <property type="entry name" value="P-loop containing nucleoside triphosphate hydrolases"/>
    <property type="match status" value="1"/>
</dbReference>
<dbReference type="PROSITE" id="PS00211">
    <property type="entry name" value="ABC_TRANSPORTER_1"/>
    <property type="match status" value="1"/>
</dbReference>
<dbReference type="PROSITE" id="PS50893">
    <property type="entry name" value="ABC_TRANSPORTER_2"/>
    <property type="match status" value="1"/>
</dbReference>
<dbReference type="PROSITE" id="PS51238">
    <property type="entry name" value="PSTB"/>
    <property type="match status" value="1"/>
</dbReference>
<organism>
    <name type="scientific">Shewanella frigidimarina (strain NCIMB 400)</name>
    <dbReference type="NCBI Taxonomy" id="318167"/>
    <lineage>
        <taxon>Bacteria</taxon>
        <taxon>Pseudomonadati</taxon>
        <taxon>Pseudomonadota</taxon>
        <taxon>Gammaproteobacteria</taxon>
        <taxon>Alteromonadales</taxon>
        <taxon>Shewanellaceae</taxon>
        <taxon>Shewanella</taxon>
    </lineage>
</organism>
<sequence>MISIDSSAMQTEAVDLANLPAQDTALEIRNLDLRYGDKQALFDVSMKIPKKQVTAFIGPSGCGKSTLLRCINRMNDLVDSCKIEGEILLHGQNIYDKKVDVAALRRNVGMVFQRPNPFPKSIYENVVYGLRLQGLSNRRDLDEAAERSLRGAAIWDEVKDRLHDNAFGLSGGQQQRLVIARAIAIEPEVLLLDEPTSALDPISTLTIEELITELKQQYTVVIVTHNMQQAARVSDQTAFMYMGELVEYADTNTIFTTPKKRKTEDYITGRYG</sequence>
<proteinExistence type="inferred from homology"/>
<feature type="chain" id="PRO_0000272524" description="Phosphate import ATP-binding protein PstB">
    <location>
        <begin position="1"/>
        <end position="272"/>
    </location>
</feature>
<feature type="domain" description="ABC transporter" evidence="1">
    <location>
        <begin position="26"/>
        <end position="267"/>
    </location>
</feature>
<feature type="binding site" evidence="1">
    <location>
        <begin position="58"/>
        <end position="65"/>
    </location>
    <ligand>
        <name>ATP</name>
        <dbReference type="ChEBI" id="CHEBI:30616"/>
    </ligand>
</feature>
<gene>
    <name evidence="1" type="primary">pstB</name>
    <name type="ordered locus">Sfri_1359</name>
</gene>
<keyword id="KW-0067">ATP-binding</keyword>
<keyword id="KW-0997">Cell inner membrane</keyword>
<keyword id="KW-1003">Cell membrane</keyword>
<keyword id="KW-0472">Membrane</keyword>
<keyword id="KW-0547">Nucleotide-binding</keyword>
<keyword id="KW-0592">Phosphate transport</keyword>
<keyword id="KW-1185">Reference proteome</keyword>
<keyword id="KW-1278">Translocase</keyword>
<keyword id="KW-0813">Transport</keyword>